<accession>Q144Q2</accession>
<sequence length="192" mass="20633">MSKSTDRINLTNQFLIAMPNMADPTFSGTVVYLCDHSERGALGLVINRPTDIDLQALFSRIDLKLEIEPLLHVPVYFGGPVQTERGFVLHDPKDGNAYTSSMSVPGGLEMTTSKDVLEAVASGTGPERFLLTLGHAGWGAGQLEEEISKNGWLTVEADPKIVFDVPAEERLEAALALLGINLSMLSGEAGHA</sequence>
<gene>
    <name type="ordered locus">Bxeno_A0649</name>
    <name type="ORF">Bxe_A3811</name>
</gene>
<dbReference type="EMBL" id="CP000270">
    <property type="protein sequence ID" value="ABE29187.1"/>
    <property type="status" value="ALT_INIT"/>
    <property type="molecule type" value="Genomic_DNA"/>
</dbReference>
<dbReference type="RefSeq" id="WP_007178990.1">
    <property type="nucleotide sequence ID" value="NZ_CP008760.1"/>
</dbReference>
<dbReference type="SMR" id="Q144Q2"/>
<dbReference type="STRING" id="266265.Bxe_A3811"/>
<dbReference type="KEGG" id="bxb:DR64_1488"/>
<dbReference type="KEGG" id="bxe:Bxe_A3811"/>
<dbReference type="eggNOG" id="COG1678">
    <property type="taxonomic scope" value="Bacteria"/>
</dbReference>
<dbReference type="OrthoDB" id="9807486at2"/>
<dbReference type="Proteomes" id="UP000001817">
    <property type="component" value="Chromosome 1"/>
</dbReference>
<dbReference type="GO" id="GO:0005829">
    <property type="term" value="C:cytosol"/>
    <property type="evidence" value="ECO:0007669"/>
    <property type="project" value="TreeGrafter"/>
</dbReference>
<dbReference type="Gene3D" id="3.40.1740.10">
    <property type="entry name" value="VC0467-like"/>
    <property type="match status" value="1"/>
</dbReference>
<dbReference type="HAMAP" id="MF_00758">
    <property type="entry name" value="UPF0301"/>
    <property type="match status" value="1"/>
</dbReference>
<dbReference type="InterPro" id="IPR003774">
    <property type="entry name" value="AlgH-like"/>
</dbReference>
<dbReference type="NCBIfam" id="NF001266">
    <property type="entry name" value="PRK00228.1-1"/>
    <property type="match status" value="1"/>
</dbReference>
<dbReference type="NCBIfam" id="NF001267">
    <property type="entry name" value="PRK00228.1-2"/>
    <property type="match status" value="1"/>
</dbReference>
<dbReference type="PANTHER" id="PTHR30327">
    <property type="entry name" value="UNCHARACTERIZED PROTEIN YQGE"/>
    <property type="match status" value="1"/>
</dbReference>
<dbReference type="PANTHER" id="PTHR30327:SF1">
    <property type="entry name" value="UPF0301 PROTEIN YQGE"/>
    <property type="match status" value="1"/>
</dbReference>
<dbReference type="Pfam" id="PF02622">
    <property type="entry name" value="DUF179"/>
    <property type="match status" value="1"/>
</dbReference>
<dbReference type="SUPFAM" id="SSF143456">
    <property type="entry name" value="VC0467-like"/>
    <property type="match status" value="1"/>
</dbReference>
<evidence type="ECO:0000255" key="1">
    <source>
        <dbReference type="HAMAP-Rule" id="MF_00758"/>
    </source>
</evidence>
<evidence type="ECO:0000305" key="2"/>
<name>Y0649_PARXL</name>
<protein>
    <recommendedName>
        <fullName evidence="1">UPF0301 protein Bxeno_A0649</fullName>
    </recommendedName>
</protein>
<keyword id="KW-1185">Reference proteome</keyword>
<proteinExistence type="inferred from homology"/>
<feature type="chain" id="PRO_0000258812" description="UPF0301 protein Bxeno_A0649">
    <location>
        <begin position="1"/>
        <end position="192"/>
    </location>
</feature>
<reference key="1">
    <citation type="journal article" date="2006" name="Proc. Natl. Acad. Sci. U.S.A.">
        <title>Burkholderia xenovorans LB400 harbors a multi-replicon, 9.73-Mbp genome shaped for versatility.</title>
        <authorList>
            <person name="Chain P.S.G."/>
            <person name="Denef V.J."/>
            <person name="Konstantinidis K.T."/>
            <person name="Vergez L.M."/>
            <person name="Agullo L."/>
            <person name="Reyes V.L."/>
            <person name="Hauser L."/>
            <person name="Cordova M."/>
            <person name="Gomez L."/>
            <person name="Gonzalez M."/>
            <person name="Land M."/>
            <person name="Lao V."/>
            <person name="Larimer F."/>
            <person name="LiPuma J.J."/>
            <person name="Mahenthiralingam E."/>
            <person name="Malfatti S.A."/>
            <person name="Marx C.J."/>
            <person name="Parnell J.J."/>
            <person name="Ramette A."/>
            <person name="Richardson P."/>
            <person name="Seeger M."/>
            <person name="Smith D."/>
            <person name="Spilker T."/>
            <person name="Sul W.J."/>
            <person name="Tsoi T.V."/>
            <person name="Ulrich L.E."/>
            <person name="Zhulin I.B."/>
            <person name="Tiedje J.M."/>
        </authorList>
    </citation>
    <scope>NUCLEOTIDE SEQUENCE [LARGE SCALE GENOMIC DNA]</scope>
    <source>
        <strain>LB400</strain>
    </source>
</reference>
<comment type="similarity">
    <text evidence="1">Belongs to the UPF0301 (AlgH) family.</text>
</comment>
<comment type="sequence caution" evidence="2">
    <conflict type="erroneous initiation">
        <sequence resource="EMBL-CDS" id="ABE29187"/>
    </conflict>
</comment>
<organism>
    <name type="scientific">Paraburkholderia xenovorans (strain LB400)</name>
    <dbReference type="NCBI Taxonomy" id="266265"/>
    <lineage>
        <taxon>Bacteria</taxon>
        <taxon>Pseudomonadati</taxon>
        <taxon>Pseudomonadota</taxon>
        <taxon>Betaproteobacteria</taxon>
        <taxon>Burkholderiales</taxon>
        <taxon>Burkholderiaceae</taxon>
        <taxon>Paraburkholderia</taxon>
    </lineage>
</organism>